<comment type="function">
    <text evidence="3">Functions as a soluble gibberellin (GA) receptor. GA is an essential hormone that regulates growth and development in plants. Binds with high affinity the biologically active GAs such as GA1, GA3 and GA4, but has low or no affinity for the biologically inactive GAs. Upon GA-binding, it interacts with the DELLA protein SLR1, a repressor of GA signaling. This leads to SLR1 degradation by the proteasome, allowing the GA signaling pathway.</text>
</comment>
<comment type="subunit">
    <text evidence="3 4 5">Interacts with the DELLA protein SLR1 in a GA-dependent manner, resulting in subsequent SLR1 degradation.</text>
</comment>
<comment type="subcellular location">
    <subcellularLocation>
        <location evidence="3">Nucleus</location>
    </subcellularLocation>
</comment>
<comment type="disruption phenotype">
    <text evidence="3">Severe dwarf phenotype with wide and dark-green leaf blades. Plants insensitive to gibberellic acid (GA).</text>
</comment>
<comment type="similarity">
    <text evidence="7">Belongs to the 'GDXG' lipolytic enzyme family.</text>
</comment>
<feature type="chain" id="PRO_0000071557" description="Gibberellin receptor GID1">
    <location>
        <begin position="1"/>
        <end position="354"/>
    </location>
</feature>
<feature type="short sequence motif" description="Involved in the stabilization of the negatively charged intermediate by the formation of the oxyanion hole" evidence="1">
    <location>
        <begin position="120"/>
        <end position="122"/>
    </location>
</feature>
<feature type="active site" evidence="2">
    <location>
        <position position="198"/>
    </location>
</feature>
<feature type="active site" evidence="1">
    <location>
        <position position="296"/>
    </location>
</feature>
<feature type="binding site" evidence="4 12">
    <location>
        <begin position="122"/>
        <end position="123"/>
    </location>
    <ligand>
        <name>gibberellin A3</name>
        <dbReference type="ChEBI" id="CHEBI:58590"/>
    </ligand>
</feature>
<feature type="binding site" evidence="4 11">
    <location>
        <begin position="122"/>
        <end position="123"/>
    </location>
    <ligand>
        <name>gibberellin A4</name>
        <dbReference type="ChEBI" id="CHEBI:73251"/>
    </ligand>
</feature>
<feature type="binding site" evidence="4 12">
    <location>
        <position position="134"/>
    </location>
    <ligand>
        <name>gibberellin A3</name>
        <dbReference type="ChEBI" id="CHEBI:58590"/>
    </ligand>
</feature>
<feature type="binding site" evidence="4 11">
    <location>
        <position position="134"/>
    </location>
    <ligand>
        <name>gibberellin A4</name>
        <dbReference type="ChEBI" id="CHEBI:73251"/>
    </ligand>
</feature>
<feature type="binding site" evidence="4 12">
    <location>
        <position position="198"/>
    </location>
    <ligand>
        <name>gibberellin A3</name>
        <dbReference type="ChEBI" id="CHEBI:58590"/>
    </ligand>
</feature>
<feature type="binding site" evidence="4 11">
    <location>
        <position position="198"/>
    </location>
    <ligand>
        <name>gibberellin A4</name>
        <dbReference type="ChEBI" id="CHEBI:73251"/>
    </ligand>
</feature>
<feature type="binding site" evidence="4 12">
    <location>
        <position position="250"/>
    </location>
    <ligand>
        <name>gibberellin A3</name>
        <dbReference type="ChEBI" id="CHEBI:58590"/>
    </ligand>
</feature>
<feature type="binding site" evidence="4 12">
    <location>
        <position position="327"/>
    </location>
    <ligand>
        <name>gibberellin A3</name>
        <dbReference type="ChEBI" id="CHEBI:58590"/>
    </ligand>
</feature>
<feature type="binding site" evidence="4 11">
    <location>
        <position position="327"/>
    </location>
    <ligand>
        <name>gibberellin A4</name>
        <dbReference type="ChEBI" id="CHEBI:73251"/>
    </ligand>
</feature>
<feature type="mutagenesis site" description="In gid1-1; abolishes binding to GA and ability to degrade SLR1." evidence="3">
    <original>G</original>
    <variation>D</variation>
    <location>
        <position position="196"/>
    </location>
</feature>
<feature type="mutagenesis site" description="In gid1-2; abolishes binding to GA and ability to degrade SLR1." evidence="3">
    <original>R</original>
    <variation>T</variation>
    <location>
        <position position="251"/>
    </location>
</feature>
<feature type="helix" evidence="13">
    <location>
        <begin position="18"/>
        <end position="34"/>
    </location>
</feature>
<feature type="helix" evidence="13">
    <location>
        <begin position="43"/>
        <end position="49"/>
    </location>
</feature>
<feature type="strand" evidence="13">
    <location>
        <begin position="63"/>
        <end position="71"/>
    </location>
</feature>
<feature type="turn" evidence="13">
    <location>
        <begin position="72"/>
        <end position="75"/>
    </location>
</feature>
<feature type="strand" evidence="13">
    <location>
        <begin position="76"/>
        <end position="83"/>
    </location>
</feature>
<feature type="helix" evidence="13">
    <location>
        <begin position="102"/>
        <end position="105"/>
    </location>
</feature>
<feature type="strand" evidence="13">
    <location>
        <begin position="109"/>
        <end position="111"/>
    </location>
</feature>
<feature type="strand" evidence="13">
    <location>
        <begin position="114"/>
        <end position="119"/>
    </location>
</feature>
<feature type="turn" evidence="13">
    <location>
        <begin position="123"/>
        <end position="125"/>
    </location>
</feature>
<feature type="helix" evidence="13">
    <location>
        <begin position="132"/>
        <end position="145"/>
    </location>
</feature>
<feature type="strand" evidence="13">
    <location>
        <begin position="147"/>
        <end position="152"/>
    </location>
</feature>
<feature type="turn" evidence="13">
    <location>
        <begin position="157"/>
        <end position="159"/>
    </location>
</feature>
<feature type="helix" evidence="13">
    <location>
        <begin position="164"/>
        <end position="178"/>
    </location>
</feature>
<feature type="turn" evidence="13">
    <location>
        <begin position="180"/>
        <end position="182"/>
    </location>
</feature>
<feature type="turn" evidence="13">
    <location>
        <begin position="185"/>
        <end position="188"/>
    </location>
</feature>
<feature type="strand" evidence="13">
    <location>
        <begin position="189"/>
        <end position="197"/>
    </location>
</feature>
<feature type="helix" evidence="13">
    <location>
        <begin position="200"/>
        <end position="213"/>
    </location>
</feature>
<feature type="strand" evidence="13">
    <location>
        <begin position="220"/>
        <end position="225"/>
    </location>
</feature>
<feature type="helix" evidence="13">
    <location>
        <begin position="235"/>
        <end position="240"/>
    </location>
</feature>
<feature type="turn" evidence="13">
    <location>
        <begin position="241"/>
        <end position="243"/>
    </location>
</feature>
<feature type="helix" evidence="13">
    <location>
        <begin position="248"/>
        <end position="258"/>
    </location>
</feature>
<feature type="turn" evidence="13">
    <location>
        <begin position="268"/>
        <end position="270"/>
    </location>
</feature>
<feature type="strand" evidence="13">
    <location>
        <begin position="288"/>
        <end position="293"/>
    </location>
</feature>
<feature type="helix" evidence="13">
    <location>
        <begin position="299"/>
        <end position="311"/>
    </location>
</feature>
<feature type="strand" evidence="13">
    <location>
        <begin position="316"/>
        <end position="321"/>
    </location>
</feature>
<feature type="helix" evidence="13">
    <location>
        <begin position="328"/>
        <end position="330"/>
    </location>
</feature>
<feature type="helix" evidence="13">
    <location>
        <begin position="335"/>
        <end position="352"/>
    </location>
</feature>
<organism>
    <name type="scientific">Oryza sativa subsp. japonica</name>
    <name type="common">Rice</name>
    <dbReference type="NCBI Taxonomy" id="39947"/>
    <lineage>
        <taxon>Eukaryota</taxon>
        <taxon>Viridiplantae</taxon>
        <taxon>Streptophyta</taxon>
        <taxon>Embryophyta</taxon>
        <taxon>Tracheophyta</taxon>
        <taxon>Spermatophyta</taxon>
        <taxon>Magnoliopsida</taxon>
        <taxon>Liliopsida</taxon>
        <taxon>Poales</taxon>
        <taxon>Poaceae</taxon>
        <taxon>BOP clade</taxon>
        <taxon>Oryzoideae</taxon>
        <taxon>Oryzeae</taxon>
        <taxon>Oryzinae</taxon>
        <taxon>Oryza</taxon>
        <taxon>Oryza sativa</taxon>
    </lineage>
</organism>
<name>GID1_ORYSJ</name>
<sequence>MAGSDEVNRNECKTVVPLHTWVLISNFKLSYNILRRADGTFERDLGEYLDRRVPANARPLEGVSSFDHIIDQSVGLEVRIYRAAAEGDAEEGAAAVTRPILEFLTDAPAAEPFPVIIFFHGGSFVHSSASSTIYDSLCRRFVKLSKGVVVSVNYRRAPEHRYPCAYDDGWTALKWVMSQPFMRSGGDAQARVFLSGDSSGGNIAHHVAVRAADEGVKVCGNILLNAMFGGTERTESERRLDGKYFVTLQDRDWYWKAYLPEDADRDHPACNPFGPNGRRLGGLPFAKSLIIVSGLDLTCDRQLAYADALREDGHHVKVVQCENATVGFYLLPNTVHYHEVMEEISDFLNANLYY</sequence>
<dbReference type="EC" id="3.-.-.-" evidence="7"/>
<dbReference type="EMBL" id="AB211399">
    <property type="protein sequence ID" value="BAE45340.1"/>
    <property type="molecule type" value="mRNA"/>
</dbReference>
<dbReference type="EMBL" id="AC105319">
    <property type="protein sequence ID" value="AAT38036.1"/>
    <property type="molecule type" value="Genomic_DNA"/>
</dbReference>
<dbReference type="EMBL" id="AC137928">
    <property type="protein sequence ID" value="AAV59435.1"/>
    <property type="molecule type" value="Genomic_DNA"/>
</dbReference>
<dbReference type="EMBL" id="AP008211">
    <property type="protein sequence ID" value="BAF17434.1"/>
    <property type="molecule type" value="Genomic_DNA"/>
</dbReference>
<dbReference type="EMBL" id="AP014961">
    <property type="protein sequence ID" value="BAS93968.1"/>
    <property type="molecule type" value="Genomic_DNA"/>
</dbReference>
<dbReference type="EMBL" id="CM000142">
    <property type="protein sequence ID" value="EEE63694.1"/>
    <property type="molecule type" value="Genomic_DNA"/>
</dbReference>
<dbReference type="EMBL" id="AK074026">
    <property type="protein sequence ID" value="BAG93769.1"/>
    <property type="molecule type" value="mRNA"/>
</dbReference>
<dbReference type="RefSeq" id="XP_015639961.1">
    <property type="nucleotide sequence ID" value="XM_015784475.1"/>
</dbReference>
<dbReference type="PDB" id="3EBL">
    <property type="method" value="X-ray"/>
    <property type="resolution" value="1.90 A"/>
    <property type="chains" value="A/B/C/D/E/F=2-354"/>
</dbReference>
<dbReference type="PDB" id="3ED1">
    <property type="method" value="X-ray"/>
    <property type="resolution" value="1.90 A"/>
    <property type="chains" value="A/B/C/D/E/F=2-354"/>
</dbReference>
<dbReference type="PDBsum" id="3EBL"/>
<dbReference type="PDBsum" id="3ED1"/>
<dbReference type="SMR" id="Q6L545"/>
<dbReference type="BioGRID" id="807801">
    <property type="interactions" value="4"/>
</dbReference>
<dbReference type="DIP" id="DIP-59773N"/>
<dbReference type="FunCoup" id="Q6L545">
    <property type="interactions" value="515"/>
</dbReference>
<dbReference type="IntAct" id="Q6L545">
    <property type="interactions" value="1"/>
</dbReference>
<dbReference type="STRING" id="39947.Q6L545"/>
<dbReference type="ESTHER" id="orysa-gid1">
    <property type="family name" value="Plant_carboxylesterase"/>
</dbReference>
<dbReference type="PaxDb" id="39947-Q6L545"/>
<dbReference type="EnsemblPlants" id="Os05t0407500-01">
    <property type="protein sequence ID" value="Os05t0407500-01"/>
    <property type="gene ID" value="Os05g0407500"/>
</dbReference>
<dbReference type="Gramene" id="Os05t0407500-01">
    <property type="protein sequence ID" value="Os05t0407500-01"/>
    <property type="gene ID" value="Os05g0407500"/>
</dbReference>
<dbReference type="KEGG" id="dosa:Os05g0407500"/>
<dbReference type="eggNOG" id="KOG1515">
    <property type="taxonomic scope" value="Eukaryota"/>
</dbReference>
<dbReference type="HOGENOM" id="CLU_012494_22_1_1"/>
<dbReference type="InParanoid" id="Q6L545"/>
<dbReference type="OMA" id="CRNAVET"/>
<dbReference type="OrthoDB" id="408631at2759"/>
<dbReference type="PlantReactome" id="R-OSA-5679411">
    <property type="pathway name" value="Gibberellin signaling"/>
</dbReference>
<dbReference type="EvolutionaryTrace" id="Q6L545"/>
<dbReference type="Proteomes" id="UP000000763">
    <property type="component" value="Chromosome 5"/>
</dbReference>
<dbReference type="Proteomes" id="UP000007752">
    <property type="component" value="Chromosome 5"/>
</dbReference>
<dbReference type="Proteomes" id="UP000059680">
    <property type="component" value="Chromosome 5"/>
</dbReference>
<dbReference type="GO" id="GO:0005737">
    <property type="term" value="C:cytoplasm"/>
    <property type="evidence" value="ECO:0000318"/>
    <property type="project" value="GO_Central"/>
</dbReference>
<dbReference type="GO" id="GO:0005634">
    <property type="term" value="C:nucleus"/>
    <property type="evidence" value="ECO:0000318"/>
    <property type="project" value="GO_Central"/>
</dbReference>
<dbReference type="GO" id="GO:0010331">
    <property type="term" value="F:gibberellin binding"/>
    <property type="evidence" value="ECO:0000314"/>
    <property type="project" value="UniProtKB"/>
</dbReference>
<dbReference type="GO" id="GO:0016787">
    <property type="term" value="F:hydrolase activity"/>
    <property type="evidence" value="ECO:0007669"/>
    <property type="project" value="UniProtKB-KW"/>
</dbReference>
<dbReference type="GO" id="GO:0048444">
    <property type="term" value="P:floral organ morphogenesis"/>
    <property type="evidence" value="ECO:0000318"/>
    <property type="project" value="GO_Central"/>
</dbReference>
<dbReference type="GO" id="GO:0009740">
    <property type="term" value="P:gibberellic acid mediated signaling pathway"/>
    <property type="evidence" value="ECO:0007669"/>
    <property type="project" value="UniProtKB-KW"/>
</dbReference>
<dbReference type="GO" id="GO:0009939">
    <property type="term" value="P:positive regulation of gibberellic acid mediated signaling pathway"/>
    <property type="evidence" value="ECO:0000318"/>
    <property type="project" value="GO_Central"/>
</dbReference>
<dbReference type="GO" id="GO:0010325">
    <property type="term" value="P:raffinose family oligosaccharide biosynthetic process"/>
    <property type="evidence" value="ECO:0000318"/>
    <property type="project" value="GO_Central"/>
</dbReference>
<dbReference type="GO" id="GO:0009739">
    <property type="term" value="P:response to gibberellin"/>
    <property type="evidence" value="ECO:0000305"/>
    <property type="project" value="Gramene"/>
</dbReference>
<dbReference type="FunFam" id="3.40.50.1820:FF:000087">
    <property type="entry name" value="Gibberellin receptor GID1"/>
    <property type="match status" value="1"/>
</dbReference>
<dbReference type="Gene3D" id="3.40.50.1820">
    <property type="entry name" value="alpha/beta hydrolase"/>
    <property type="match status" value="1"/>
</dbReference>
<dbReference type="InterPro" id="IPR013094">
    <property type="entry name" value="AB_hydrolase_3"/>
</dbReference>
<dbReference type="InterPro" id="IPR029058">
    <property type="entry name" value="AB_hydrolase_fold"/>
</dbReference>
<dbReference type="InterPro" id="IPR050466">
    <property type="entry name" value="Carboxylest/Gibb_receptor"/>
</dbReference>
<dbReference type="InterPro" id="IPR002168">
    <property type="entry name" value="Lipase_GDXG_HIS_AS"/>
</dbReference>
<dbReference type="InterPro" id="IPR033140">
    <property type="entry name" value="Lipase_GDXG_put_SER_AS"/>
</dbReference>
<dbReference type="PANTHER" id="PTHR23024">
    <property type="entry name" value="ARYLACETAMIDE DEACETYLASE"/>
    <property type="match status" value="1"/>
</dbReference>
<dbReference type="PANTHER" id="PTHR23024:SF492">
    <property type="entry name" value="GIBBERELLIN RECEPTOR GID1C"/>
    <property type="match status" value="1"/>
</dbReference>
<dbReference type="Pfam" id="PF07859">
    <property type="entry name" value="Abhydrolase_3"/>
    <property type="match status" value="1"/>
</dbReference>
<dbReference type="SUPFAM" id="SSF53474">
    <property type="entry name" value="alpha/beta-Hydrolases"/>
    <property type="match status" value="1"/>
</dbReference>
<dbReference type="PROSITE" id="PS01173">
    <property type="entry name" value="LIPASE_GDXG_HIS"/>
    <property type="match status" value="1"/>
</dbReference>
<dbReference type="PROSITE" id="PS01174">
    <property type="entry name" value="LIPASE_GDXG_SER"/>
    <property type="match status" value="1"/>
</dbReference>
<accession>Q6L545</accession>
<accession>Q0DI89</accession>
<proteinExistence type="evidence at protein level"/>
<evidence type="ECO:0000250" key="1">
    <source>
        <dbReference type="UniProtKB" id="Q5NUF3"/>
    </source>
</evidence>
<evidence type="ECO:0000255" key="2">
    <source>
        <dbReference type="PROSITE-ProRule" id="PRU10038"/>
    </source>
</evidence>
<evidence type="ECO:0000269" key="3">
    <source>
    </source>
</evidence>
<evidence type="ECO:0000269" key="4">
    <source>
    </source>
</evidence>
<evidence type="ECO:0000269" key="5">
    <source>
    </source>
</evidence>
<evidence type="ECO:0000303" key="6">
    <source>
    </source>
</evidence>
<evidence type="ECO:0000305" key="7"/>
<evidence type="ECO:0000312" key="8">
    <source>
        <dbReference type="EMBL" id="AAT38036.1"/>
    </source>
</evidence>
<evidence type="ECO:0000312" key="9">
    <source>
        <dbReference type="EMBL" id="AAV59435.1"/>
    </source>
</evidence>
<evidence type="ECO:0000312" key="10">
    <source>
        <dbReference type="EMBL" id="BAF17434.1"/>
    </source>
</evidence>
<evidence type="ECO:0007744" key="11">
    <source>
        <dbReference type="PDB" id="3EBL"/>
    </source>
</evidence>
<evidence type="ECO:0007744" key="12">
    <source>
        <dbReference type="PDB" id="3ED1"/>
    </source>
</evidence>
<evidence type="ECO:0007829" key="13">
    <source>
        <dbReference type="PDB" id="3EBL"/>
    </source>
</evidence>
<reference key="1">
    <citation type="journal article" date="2005" name="Nature">
        <title>GIBBERELLIN INSENSITIVE DWARF1 encodes a soluble receptor for gibberellin.</title>
        <authorList>
            <person name="Ueguchi-Tanaka M."/>
            <person name="Ashikari M."/>
            <person name="Nakajima M."/>
            <person name="Itoh H."/>
            <person name="Katoh E."/>
            <person name="Kobayashi M."/>
            <person name="Chow T.-Y."/>
            <person name="Hsing Y.-I."/>
            <person name="Kitano H."/>
            <person name="Yamaguchi I."/>
            <person name="Matsuoka M."/>
        </authorList>
    </citation>
    <scope>NUCLEOTIDE SEQUENCE [MRNA]</scope>
    <scope>FUNCTION</scope>
    <scope>SUBCELLULAR LOCATION</scope>
    <scope>INTERACTION WITH SLR1</scope>
    <scope>DISRUPTION PHENOTYPE</scope>
    <scope>MUTAGENESIS OF GLY-196 AND ARG-251</scope>
    <source>
        <strain>cv. Taichung 65</strain>
    </source>
</reference>
<reference key="2">
    <citation type="journal article" date="2005" name="Mol. Genet. Genomics">
        <title>A fine physical map of the rice chromosome 5.</title>
        <authorList>
            <person name="Cheng C.-H."/>
            <person name="Chung M.C."/>
            <person name="Liu S.-M."/>
            <person name="Chen S.-K."/>
            <person name="Kao F.Y."/>
            <person name="Lin S.-J."/>
            <person name="Hsiao S.-H."/>
            <person name="Tseng I.C."/>
            <person name="Hsing Y.-I.C."/>
            <person name="Wu H.-P."/>
            <person name="Chen C.-S."/>
            <person name="Shaw J.-F."/>
            <person name="Wu J."/>
            <person name="Matsumoto T."/>
            <person name="Sasaki T."/>
            <person name="Chen H.-C."/>
            <person name="Chow T.-Y."/>
        </authorList>
    </citation>
    <scope>NUCLEOTIDE SEQUENCE [LARGE SCALE GENOMIC DNA]</scope>
    <source>
        <strain>cv. Nipponbare</strain>
    </source>
</reference>
<reference key="3">
    <citation type="journal article" date="2005" name="Nature">
        <title>The map-based sequence of the rice genome.</title>
        <authorList>
            <consortium name="International rice genome sequencing project (IRGSP)"/>
        </authorList>
    </citation>
    <scope>NUCLEOTIDE SEQUENCE [LARGE SCALE GENOMIC DNA]</scope>
    <source>
        <strain>cv. Nipponbare</strain>
    </source>
</reference>
<reference key="4">
    <citation type="journal article" date="2008" name="Nucleic Acids Res.">
        <title>The rice annotation project database (RAP-DB): 2008 update.</title>
        <authorList>
            <consortium name="The rice annotation project (RAP)"/>
        </authorList>
    </citation>
    <scope>GENOME REANNOTATION</scope>
    <source>
        <strain>cv. Nipponbare</strain>
    </source>
</reference>
<reference key="5">
    <citation type="journal article" date="2013" name="Rice">
        <title>Improvement of the Oryza sativa Nipponbare reference genome using next generation sequence and optical map data.</title>
        <authorList>
            <person name="Kawahara Y."/>
            <person name="de la Bastide M."/>
            <person name="Hamilton J.P."/>
            <person name="Kanamori H."/>
            <person name="McCombie W.R."/>
            <person name="Ouyang S."/>
            <person name="Schwartz D.C."/>
            <person name="Tanaka T."/>
            <person name="Wu J."/>
            <person name="Zhou S."/>
            <person name="Childs K.L."/>
            <person name="Davidson R.M."/>
            <person name="Lin H."/>
            <person name="Quesada-Ocampo L."/>
            <person name="Vaillancourt B."/>
            <person name="Sakai H."/>
            <person name="Lee S.S."/>
            <person name="Kim J."/>
            <person name="Numa H."/>
            <person name="Itoh T."/>
            <person name="Buell C.R."/>
            <person name="Matsumoto T."/>
        </authorList>
    </citation>
    <scope>GENOME REANNOTATION</scope>
    <source>
        <strain>cv. Nipponbare</strain>
    </source>
</reference>
<reference key="6">
    <citation type="journal article" date="2005" name="PLoS Biol.">
        <title>The genomes of Oryza sativa: a history of duplications.</title>
        <authorList>
            <person name="Yu J."/>
            <person name="Wang J."/>
            <person name="Lin W."/>
            <person name="Li S."/>
            <person name="Li H."/>
            <person name="Zhou J."/>
            <person name="Ni P."/>
            <person name="Dong W."/>
            <person name="Hu S."/>
            <person name="Zeng C."/>
            <person name="Zhang J."/>
            <person name="Zhang Y."/>
            <person name="Li R."/>
            <person name="Xu Z."/>
            <person name="Li S."/>
            <person name="Li X."/>
            <person name="Zheng H."/>
            <person name="Cong L."/>
            <person name="Lin L."/>
            <person name="Yin J."/>
            <person name="Geng J."/>
            <person name="Li G."/>
            <person name="Shi J."/>
            <person name="Liu J."/>
            <person name="Lv H."/>
            <person name="Li J."/>
            <person name="Wang J."/>
            <person name="Deng Y."/>
            <person name="Ran L."/>
            <person name="Shi X."/>
            <person name="Wang X."/>
            <person name="Wu Q."/>
            <person name="Li C."/>
            <person name="Ren X."/>
            <person name="Wang J."/>
            <person name="Wang X."/>
            <person name="Li D."/>
            <person name="Liu D."/>
            <person name="Zhang X."/>
            <person name="Ji Z."/>
            <person name="Zhao W."/>
            <person name="Sun Y."/>
            <person name="Zhang Z."/>
            <person name="Bao J."/>
            <person name="Han Y."/>
            <person name="Dong L."/>
            <person name="Ji J."/>
            <person name="Chen P."/>
            <person name="Wu S."/>
            <person name="Liu J."/>
            <person name="Xiao Y."/>
            <person name="Bu D."/>
            <person name="Tan J."/>
            <person name="Yang L."/>
            <person name="Ye C."/>
            <person name="Zhang J."/>
            <person name="Xu J."/>
            <person name="Zhou Y."/>
            <person name="Yu Y."/>
            <person name="Zhang B."/>
            <person name="Zhuang S."/>
            <person name="Wei H."/>
            <person name="Liu B."/>
            <person name="Lei M."/>
            <person name="Yu H."/>
            <person name="Li Y."/>
            <person name="Xu H."/>
            <person name="Wei S."/>
            <person name="He X."/>
            <person name="Fang L."/>
            <person name="Zhang Z."/>
            <person name="Zhang Y."/>
            <person name="Huang X."/>
            <person name="Su Z."/>
            <person name="Tong W."/>
            <person name="Li J."/>
            <person name="Tong Z."/>
            <person name="Li S."/>
            <person name="Ye J."/>
            <person name="Wang L."/>
            <person name="Fang L."/>
            <person name="Lei T."/>
            <person name="Chen C.-S."/>
            <person name="Chen H.-C."/>
            <person name="Xu Z."/>
            <person name="Li H."/>
            <person name="Huang H."/>
            <person name="Zhang F."/>
            <person name="Xu H."/>
            <person name="Li N."/>
            <person name="Zhao C."/>
            <person name="Li S."/>
            <person name="Dong L."/>
            <person name="Huang Y."/>
            <person name="Li L."/>
            <person name="Xi Y."/>
            <person name="Qi Q."/>
            <person name="Li W."/>
            <person name="Zhang B."/>
            <person name="Hu W."/>
            <person name="Zhang Y."/>
            <person name="Tian X."/>
            <person name="Jiao Y."/>
            <person name="Liang X."/>
            <person name="Jin J."/>
            <person name="Gao L."/>
            <person name="Zheng W."/>
            <person name="Hao B."/>
            <person name="Liu S.-M."/>
            <person name="Wang W."/>
            <person name="Yuan L."/>
            <person name="Cao M."/>
            <person name="McDermott J."/>
            <person name="Samudrala R."/>
            <person name="Wang J."/>
            <person name="Wong G.K.-S."/>
            <person name="Yang H."/>
        </authorList>
    </citation>
    <scope>NUCLEOTIDE SEQUENCE [LARGE SCALE GENOMIC DNA]</scope>
    <source>
        <strain>cv. Nipponbare</strain>
    </source>
</reference>
<reference key="7">
    <citation type="journal article" date="2003" name="Science">
        <title>Collection, mapping, and annotation of over 28,000 cDNA clones from japonica rice.</title>
        <authorList>
            <consortium name="The rice full-length cDNA consortium"/>
        </authorList>
    </citation>
    <scope>NUCLEOTIDE SEQUENCE [LARGE SCALE MRNA]</scope>
    <source>
        <strain>cv. Nipponbare</strain>
    </source>
</reference>
<reference key="8">
    <citation type="journal article" date="2013" name="Nat. Commun.">
        <title>Molecular mechanism of strigolactone perception by DWARF14.</title>
        <authorList>
            <person name="Nakamura H."/>
            <person name="Xue Y.L."/>
            <person name="Miyakawa T."/>
            <person name="Hou F."/>
            <person name="Qin H.M."/>
            <person name="Fukui K."/>
            <person name="Shi X."/>
            <person name="Ito E."/>
            <person name="Ito S."/>
            <person name="Park S.H."/>
            <person name="Miyauchi Y."/>
            <person name="Asano A."/>
            <person name="Totsuka N."/>
            <person name="Ueda T."/>
            <person name="Tanokura M."/>
            <person name="Asami T."/>
        </authorList>
    </citation>
    <scope>INTERACTION WITH SLR1</scope>
</reference>
<reference evidence="11 12" key="9">
    <citation type="journal article" date="2008" name="Nature">
        <title>Structural basis for gibberellin recognition by its receptor GID1.</title>
        <authorList>
            <person name="Shimada A."/>
            <person name="Ueguchi-Tanaka M."/>
            <person name="Nakatsu T."/>
            <person name="Nakajima M."/>
            <person name="Naoe Y."/>
            <person name="Ohmiya H."/>
            <person name="Kato H."/>
            <person name="Matsuoka M."/>
        </authorList>
    </citation>
    <scope>X-RAY CRYSTALLOGRAPHY (1.90 ANGSTROMS) OF 2-354 IN COMPLEXES WITH GIBBERELLIN A3 AND GIBBERELLIN A4</scope>
</reference>
<keyword id="KW-0002">3D-structure</keyword>
<keyword id="KW-0939">Gibberellin signaling pathway</keyword>
<keyword id="KW-0378">Hydrolase</keyword>
<keyword id="KW-0539">Nucleus</keyword>
<keyword id="KW-0675">Receptor</keyword>
<keyword id="KW-1185">Reference proteome</keyword>
<protein>
    <recommendedName>
        <fullName evidence="6">Gibberellin receptor GID1</fullName>
        <ecNumber evidence="7">3.-.-.-</ecNumber>
    </recommendedName>
    <alternativeName>
        <fullName evidence="6">Gibberellin-insensitive dwarf protein 1</fullName>
    </alternativeName>
    <alternativeName>
        <fullName evidence="6">Protein GIBBERELLIN INSENSITIVE DWARF1</fullName>
    </alternativeName>
</protein>
<gene>
    <name evidence="6" type="primary">GID1</name>
    <name evidence="10" type="ordered locus">Os05g0407500</name>
    <name evidence="7" type="ordered locus">LOC_Os05g33730</name>
    <name evidence="8" type="ORF">OJ1657_H11.10</name>
    <name evidence="9" type="ORF">P0040B10.6</name>
</gene>